<keyword id="KW-0963">Cytoplasm</keyword>
<keyword id="KW-0648">Protein biosynthesis</keyword>
<name>RRF_SHEB2</name>
<evidence type="ECO:0000255" key="1">
    <source>
        <dbReference type="HAMAP-Rule" id="MF_00040"/>
    </source>
</evidence>
<gene>
    <name evidence="1" type="primary">frr</name>
    <name type="ordered locus">Sbal223_2899</name>
</gene>
<comment type="function">
    <text evidence="1">Responsible for the release of ribosomes from messenger RNA at the termination of protein biosynthesis. May increase the efficiency of translation by recycling ribosomes from one round of translation to another.</text>
</comment>
<comment type="subcellular location">
    <subcellularLocation>
        <location evidence="1">Cytoplasm</location>
    </subcellularLocation>
</comment>
<comment type="similarity">
    <text evidence="1">Belongs to the RRF family.</text>
</comment>
<accession>B8E7R3</accession>
<sequence length="185" mass="20698">MIENIKKDAQERMGKCVDATKNQMAKVRTGRAHPSLLDSIQVSYYGTMTPLNQVANVGVEDSRTLSVTVFDRSAIQAVEKAIMSSDLGLNPMSAGATLRIPLPALTEERRKDFIKVVRNEAENGRIAIRNVRRDAISEVKKLEKAKACTEDDVRRSEEEVQKFTDAHIKKIDEILAAKEIELMEV</sequence>
<reference key="1">
    <citation type="submission" date="2008-12" db="EMBL/GenBank/DDBJ databases">
        <title>Complete sequence of chromosome of Shewanella baltica OS223.</title>
        <authorList>
            <consortium name="US DOE Joint Genome Institute"/>
            <person name="Lucas S."/>
            <person name="Copeland A."/>
            <person name="Lapidus A."/>
            <person name="Glavina del Rio T."/>
            <person name="Dalin E."/>
            <person name="Tice H."/>
            <person name="Bruce D."/>
            <person name="Goodwin L."/>
            <person name="Pitluck S."/>
            <person name="Chertkov O."/>
            <person name="Meincke L."/>
            <person name="Brettin T."/>
            <person name="Detter J.C."/>
            <person name="Han C."/>
            <person name="Kuske C.R."/>
            <person name="Larimer F."/>
            <person name="Land M."/>
            <person name="Hauser L."/>
            <person name="Kyrpides N."/>
            <person name="Ovchinnikova G."/>
            <person name="Brettar I."/>
            <person name="Rodrigues J."/>
            <person name="Konstantinidis K."/>
            <person name="Tiedje J."/>
        </authorList>
    </citation>
    <scope>NUCLEOTIDE SEQUENCE [LARGE SCALE GENOMIC DNA]</scope>
    <source>
        <strain>OS223</strain>
    </source>
</reference>
<proteinExistence type="inferred from homology"/>
<dbReference type="EMBL" id="CP001252">
    <property type="protein sequence ID" value="ACK47385.1"/>
    <property type="molecule type" value="Genomic_DNA"/>
</dbReference>
<dbReference type="RefSeq" id="WP_006080982.1">
    <property type="nucleotide sequence ID" value="NC_011663.1"/>
</dbReference>
<dbReference type="SMR" id="B8E7R3"/>
<dbReference type="KEGG" id="sbp:Sbal223_2899"/>
<dbReference type="HOGENOM" id="CLU_073981_2_1_6"/>
<dbReference type="Proteomes" id="UP000002507">
    <property type="component" value="Chromosome"/>
</dbReference>
<dbReference type="GO" id="GO:0005829">
    <property type="term" value="C:cytosol"/>
    <property type="evidence" value="ECO:0007669"/>
    <property type="project" value="GOC"/>
</dbReference>
<dbReference type="GO" id="GO:0043023">
    <property type="term" value="F:ribosomal large subunit binding"/>
    <property type="evidence" value="ECO:0007669"/>
    <property type="project" value="TreeGrafter"/>
</dbReference>
<dbReference type="GO" id="GO:0002184">
    <property type="term" value="P:cytoplasmic translational termination"/>
    <property type="evidence" value="ECO:0007669"/>
    <property type="project" value="TreeGrafter"/>
</dbReference>
<dbReference type="CDD" id="cd00520">
    <property type="entry name" value="RRF"/>
    <property type="match status" value="1"/>
</dbReference>
<dbReference type="FunFam" id="1.10.132.20:FF:000001">
    <property type="entry name" value="Ribosome-recycling factor"/>
    <property type="match status" value="1"/>
</dbReference>
<dbReference type="FunFam" id="3.30.1360.40:FF:000001">
    <property type="entry name" value="Ribosome-recycling factor"/>
    <property type="match status" value="1"/>
</dbReference>
<dbReference type="Gene3D" id="3.30.1360.40">
    <property type="match status" value="1"/>
</dbReference>
<dbReference type="Gene3D" id="1.10.132.20">
    <property type="entry name" value="Ribosome-recycling factor"/>
    <property type="match status" value="1"/>
</dbReference>
<dbReference type="HAMAP" id="MF_00040">
    <property type="entry name" value="RRF"/>
    <property type="match status" value="1"/>
</dbReference>
<dbReference type="InterPro" id="IPR002661">
    <property type="entry name" value="Ribosome_recyc_fac"/>
</dbReference>
<dbReference type="InterPro" id="IPR023584">
    <property type="entry name" value="Ribosome_recyc_fac_dom"/>
</dbReference>
<dbReference type="InterPro" id="IPR036191">
    <property type="entry name" value="RRF_sf"/>
</dbReference>
<dbReference type="NCBIfam" id="TIGR00496">
    <property type="entry name" value="frr"/>
    <property type="match status" value="1"/>
</dbReference>
<dbReference type="PANTHER" id="PTHR20982:SF3">
    <property type="entry name" value="MITOCHONDRIAL RIBOSOME RECYCLING FACTOR PSEUDO 1"/>
    <property type="match status" value="1"/>
</dbReference>
<dbReference type="PANTHER" id="PTHR20982">
    <property type="entry name" value="RIBOSOME RECYCLING FACTOR"/>
    <property type="match status" value="1"/>
</dbReference>
<dbReference type="Pfam" id="PF01765">
    <property type="entry name" value="RRF"/>
    <property type="match status" value="1"/>
</dbReference>
<dbReference type="SUPFAM" id="SSF55194">
    <property type="entry name" value="Ribosome recycling factor, RRF"/>
    <property type="match status" value="1"/>
</dbReference>
<feature type="chain" id="PRO_1000194950" description="Ribosome-recycling factor">
    <location>
        <begin position="1"/>
        <end position="185"/>
    </location>
</feature>
<organism>
    <name type="scientific">Shewanella baltica (strain OS223)</name>
    <dbReference type="NCBI Taxonomy" id="407976"/>
    <lineage>
        <taxon>Bacteria</taxon>
        <taxon>Pseudomonadati</taxon>
        <taxon>Pseudomonadota</taxon>
        <taxon>Gammaproteobacteria</taxon>
        <taxon>Alteromonadales</taxon>
        <taxon>Shewanellaceae</taxon>
        <taxon>Shewanella</taxon>
    </lineage>
</organism>
<protein>
    <recommendedName>
        <fullName evidence="1">Ribosome-recycling factor</fullName>
        <shortName evidence="1">RRF</shortName>
    </recommendedName>
    <alternativeName>
        <fullName evidence="1">Ribosome-releasing factor</fullName>
    </alternativeName>
</protein>